<organism>
    <name type="scientific">Mycoplasmopsis agalactiae (strain NCTC 10123 / CIP 59.7 / PG2)</name>
    <name type="common">Mycoplasma agalactiae</name>
    <dbReference type="NCBI Taxonomy" id="347257"/>
    <lineage>
        <taxon>Bacteria</taxon>
        <taxon>Bacillati</taxon>
        <taxon>Mycoplasmatota</taxon>
        <taxon>Mycoplasmoidales</taxon>
        <taxon>Metamycoplasmataceae</taxon>
        <taxon>Mycoplasmopsis</taxon>
    </lineage>
</organism>
<dbReference type="EMBL" id="CU179680">
    <property type="protein sequence ID" value="CAL59292.1"/>
    <property type="molecule type" value="Genomic_DNA"/>
</dbReference>
<dbReference type="RefSeq" id="WP_011949750.1">
    <property type="nucleotide sequence ID" value="NC_009497.1"/>
</dbReference>
<dbReference type="SMR" id="A5IZ33"/>
<dbReference type="STRING" id="347257.MAG5920"/>
<dbReference type="GeneID" id="93358328"/>
<dbReference type="KEGG" id="maa:MAG5920"/>
<dbReference type="HOGENOM" id="CLU_002794_4_1_14"/>
<dbReference type="Proteomes" id="UP000007065">
    <property type="component" value="Chromosome"/>
</dbReference>
<dbReference type="GO" id="GO:0005737">
    <property type="term" value="C:cytoplasm"/>
    <property type="evidence" value="ECO:0007669"/>
    <property type="project" value="UniProtKB-SubCell"/>
</dbReference>
<dbReference type="GO" id="GO:0005525">
    <property type="term" value="F:GTP binding"/>
    <property type="evidence" value="ECO:0007669"/>
    <property type="project" value="UniProtKB-UniRule"/>
</dbReference>
<dbReference type="GO" id="GO:0003924">
    <property type="term" value="F:GTPase activity"/>
    <property type="evidence" value="ECO:0007669"/>
    <property type="project" value="InterPro"/>
</dbReference>
<dbReference type="GO" id="GO:0003746">
    <property type="term" value="F:translation elongation factor activity"/>
    <property type="evidence" value="ECO:0007669"/>
    <property type="project" value="UniProtKB-UniRule"/>
</dbReference>
<dbReference type="GO" id="GO:0032790">
    <property type="term" value="P:ribosome disassembly"/>
    <property type="evidence" value="ECO:0007669"/>
    <property type="project" value="TreeGrafter"/>
</dbReference>
<dbReference type="CDD" id="cd01886">
    <property type="entry name" value="EF-G"/>
    <property type="match status" value="1"/>
</dbReference>
<dbReference type="CDD" id="cd16262">
    <property type="entry name" value="EFG_III"/>
    <property type="match status" value="1"/>
</dbReference>
<dbReference type="CDD" id="cd01434">
    <property type="entry name" value="EFG_mtEFG1_IV"/>
    <property type="match status" value="1"/>
</dbReference>
<dbReference type="CDD" id="cd03713">
    <property type="entry name" value="EFG_mtEFG_C"/>
    <property type="match status" value="1"/>
</dbReference>
<dbReference type="CDD" id="cd04088">
    <property type="entry name" value="EFG_mtEFG_II"/>
    <property type="match status" value="1"/>
</dbReference>
<dbReference type="FunFam" id="2.40.30.10:FF:000006">
    <property type="entry name" value="Elongation factor G"/>
    <property type="match status" value="1"/>
</dbReference>
<dbReference type="FunFam" id="3.30.230.10:FF:000003">
    <property type="entry name" value="Elongation factor G"/>
    <property type="match status" value="1"/>
</dbReference>
<dbReference type="FunFam" id="3.30.70.240:FF:000001">
    <property type="entry name" value="Elongation factor G"/>
    <property type="match status" value="1"/>
</dbReference>
<dbReference type="FunFam" id="3.30.70.870:FF:000001">
    <property type="entry name" value="Elongation factor G"/>
    <property type="match status" value="1"/>
</dbReference>
<dbReference type="FunFam" id="3.40.50.300:FF:000029">
    <property type="entry name" value="Elongation factor G"/>
    <property type="match status" value="1"/>
</dbReference>
<dbReference type="Gene3D" id="3.30.230.10">
    <property type="match status" value="1"/>
</dbReference>
<dbReference type="Gene3D" id="3.30.70.240">
    <property type="match status" value="1"/>
</dbReference>
<dbReference type="Gene3D" id="3.30.70.870">
    <property type="entry name" value="Elongation Factor G (Translational Gtpase), domain 3"/>
    <property type="match status" value="1"/>
</dbReference>
<dbReference type="Gene3D" id="3.40.50.300">
    <property type="entry name" value="P-loop containing nucleotide triphosphate hydrolases"/>
    <property type="match status" value="1"/>
</dbReference>
<dbReference type="Gene3D" id="2.40.30.10">
    <property type="entry name" value="Translation factors"/>
    <property type="match status" value="1"/>
</dbReference>
<dbReference type="HAMAP" id="MF_00054_B">
    <property type="entry name" value="EF_G_EF_2_B"/>
    <property type="match status" value="1"/>
</dbReference>
<dbReference type="InterPro" id="IPR053905">
    <property type="entry name" value="EF-G-like_DII"/>
</dbReference>
<dbReference type="InterPro" id="IPR041095">
    <property type="entry name" value="EFG_II"/>
</dbReference>
<dbReference type="InterPro" id="IPR009022">
    <property type="entry name" value="EFG_III"/>
</dbReference>
<dbReference type="InterPro" id="IPR035647">
    <property type="entry name" value="EFG_III/V"/>
</dbReference>
<dbReference type="InterPro" id="IPR047872">
    <property type="entry name" value="EFG_IV"/>
</dbReference>
<dbReference type="InterPro" id="IPR035649">
    <property type="entry name" value="EFG_V"/>
</dbReference>
<dbReference type="InterPro" id="IPR000640">
    <property type="entry name" value="EFG_V-like"/>
</dbReference>
<dbReference type="InterPro" id="IPR031157">
    <property type="entry name" value="G_TR_CS"/>
</dbReference>
<dbReference type="InterPro" id="IPR027417">
    <property type="entry name" value="P-loop_NTPase"/>
</dbReference>
<dbReference type="InterPro" id="IPR020568">
    <property type="entry name" value="Ribosomal_Su5_D2-typ_SF"/>
</dbReference>
<dbReference type="InterPro" id="IPR014721">
    <property type="entry name" value="Ribsml_uS5_D2-typ_fold_subgr"/>
</dbReference>
<dbReference type="InterPro" id="IPR005225">
    <property type="entry name" value="Small_GTP-bd"/>
</dbReference>
<dbReference type="InterPro" id="IPR000795">
    <property type="entry name" value="T_Tr_GTP-bd_dom"/>
</dbReference>
<dbReference type="InterPro" id="IPR009000">
    <property type="entry name" value="Transl_B-barrel_sf"/>
</dbReference>
<dbReference type="InterPro" id="IPR004540">
    <property type="entry name" value="Transl_elong_EFG/EF2"/>
</dbReference>
<dbReference type="InterPro" id="IPR005517">
    <property type="entry name" value="Transl_elong_EFG/EF2_IV"/>
</dbReference>
<dbReference type="NCBIfam" id="TIGR00484">
    <property type="entry name" value="EF-G"/>
    <property type="match status" value="1"/>
</dbReference>
<dbReference type="NCBIfam" id="NF009381">
    <property type="entry name" value="PRK12740.1-5"/>
    <property type="match status" value="1"/>
</dbReference>
<dbReference type="NCBIfam" id="TIGR00231">
    <property type="entry name" value="small_GTP"/>
    <property type="match status" value="1"/>
</dbReference>
<dbReference type="PANTHER" id="PTHR43261:SF1">
    <property type="entry name" value="RIBOSOME-RELEASING FACTOR 2, MITOCHONDRIAL"/>
    <property type="match status" value="1"/>
</dbReference>
<dbReference type="PANTHER" id="PTHR43261">
    <property type="entry name" value="TRANSLATION ELONGATION FACTOR G-RELATED"/>
    <property type="match status" value="1"/>
</dbReference>
<dbReference type="Pfam" id="PF22042">
    <property type="entry name" value="EF-G_D2"/>
    <property type="match status" value="1"/>
</dbReference>
<dbReference type="Pfam" id="PF00679">
    <property type="entry name" value="EFG_C"/>
    <property type="match status" value="1"/>
</dbReference>
<dbReference type="Pfam" id="PF14492">
    <property type="entry name" value="EFG_III"/>
    <property type="match status" value="1"/>
</dbReference>
<dbReference type="Pfam" id="PF03764">
    <property type="entry name" value="EFG_IV"/>
    <property type="match status" value="1"/>
</dbReference>
<dbReference type="Pfam" id="PF00009">
    <property type="entry name" value="GTP_EFTU"/>
    <property type="match status" value="1"/>
</dbReference>
<dbReference type="PRINTS" id="PR00315">
    <property type="entry name" value="ELONGATNFCT"/>
</dbReference>
<dbReference type="SMART" id="SM00838">
    <property type="entry name" value="EFG_C"/>
    <property type="match status" value="1"/>
</dbReference>
<dbReference type="SMART" id="SM00889">
    <property type="entry name" value="EFG_IV"/>
    <property type="match status" value="1"/>
</dbReference>
<dbReference type="SUPFAM" id="SSF54980">
    <property type="entry name" value="EF-G C-terminal domain-like"/>
    <property type="match status" value="2"/>
</dbReference>
<dbReference type="SUPFAM" id="SSF52540">
    <property type="entry name" value="P-loop containing nucleoside triphosphate hydrolases"/>
    <property type="match status" value="1"/>
</dbReference>
<dbReference type="SUPFAM" id="SSF54211">
    <property type="entry name" value="Ribosomal protein S5 domain 2-like"/>
    <property type="match status" value="1"/>
</dbReference>
<dbReference type="SUPFAM" id="SSF50447">
    <property type="entry name" value="Translation proteins"/>
    <property type="match status" value="1"/>
</dbReference>
<dbReference type="PROSITE" id="PS00301">
    <property type="entry name" value="G_TR_1"/>
    <property type="match status" value="1"/>
</dbReference>
<dbReference type="PROSITE" id="PS51722">
    <property type="entry name" value="G_TR_2"/>
    <property type="match status" value="1"/>
</dbReference>
<name>EFG_MYCAP</name>
<sequence>MARQHKLEDYRNIGIMAHIDAGKTTTTERILLHTGKIHKIGETHDGASQMDWMAQEQERGITITSAATTAFWKGKRINIIDTPGHVDFTVEVERSLRVLDGAVTVLDAQSGVEPQTETVWRQATTYRVPRLIYVNKMDKAGADFFASVKSVKTRLNANAVAIQIPIGQESDFKGIVDLVEMKAYEYDGKPEENAKEIEIPFDLQALAKEKRQELIEAVATYDEEFMMKVLDGVEPTLDELKAMIRKATLTSEFFPAVCGTSFKNKGVKKMIDAVVDYLPSPLDIPAAKAHKGENEEVDVPATDDYPFTGLAFKVMTDPFVGSLTFIRLYAGTLQKGSYVYNSTKGTKERIGRLILMHANSRSEIDEANAGDIVAAVGLKGTTTGDTLIAEKAPEIVLERMVFPEPVISQALEPESKDAMEKLALGLQKLAAEDPTFRTYTDEETGQTIIAGMGELHLDIIVDRLKREHGVKAKVGAPQVSYRETITKSADVEGKHIKQSGGKGQYGHVWIKFEPNPDKGFEFVDKIVGGKIPKEYIKPIQKGLEDKMASGILAGYPMIDIKATLFDGSYHDVDSSELAYKIAASKALTKAKDLVGTVLLEPIMDVSVIIPDDYYGDVMGDITRRRGQIQESELRNDGDHILRCLTPLSEMFGYATDLRSMTAGRGNYQMQFHHYEKCPKNIADEIIKKRNIQLKDED</sequence>
<evidence type="ECO:0000255" key="1">
    <source>
        <dbReference type="HAMAP-Rule" id="MF_00054"/>
    </source>
</evidence>
<comment type="function">
    <text evidence="1">Catalyzes the GTP-dependent ribosomal translocation step during translation elongation. During this step, the ribosome changes from the pre-translocational (PRE) to the post-translocational (POST) state as the newly formed A-site-bound peptidyl-tRNA and P-site-bound deacylated tRNA move to the P and E sites, respectively. Catalyzes the coordinated movement of the two tRNA molecules, the mRNA and conformational changes in the ribosome.</text>
</comment>
<comment type="subcellular location">
    <subcellularLocation>
        <location evidence="1">Cytoplasm</location>
    </subcellularLocation>
</comment>
<comment type="similarity">
    <text evidence="1">Belongs to the TRAFAC class translation factor GTPase superfamily. Classic translation factor GTPase family. EF-G/EF-2 subfamily.</text>
</comment>
<keyword id="KW-0963">Cytoplasm</keyword>
<keyword id="KW-0251">Elongation factor</keyword>
<keyword id="KW-0342">GTP-binding</keyword>
<keyword id="KW-0547">Nucleotide-binding</keyword>
<keyword id="KW-0648">Protein biosynthesis</keyword>
<keyword id="KW-1185">Reference proteome</keyword>
<protein>
    <recommendedName>
        <fullName evidence="1">Elongation factor G</fullName>
        <shortName evidence="1">EF-G</shortName>
    </recommendedName>
</protein>
<accession>A5IZ33</accession>
<gene>
    <name evidence="1" type="primary">fusA</name>
    <name type="ordered locus">MAG5920</name>
</gene>
<proteinExistence type="inferred from homology"/>
<reference key="1">
    <citation type="journal article" date="2007" name="PLoS Genet.">
        <title>Being pathogenic, plastic, and sexual while living with a nearly minimal bacterial genome.</title>
        <authorList>
            <person name="Sirand-Pugnet P."/>
            <person name="Lartigue C."/>
            <person name="Marenda M."/>
            <person name="Jacob D."/>
            <person name="Barre A."/>
            <person name="Barbe V."/>
            <person name="Schenowitz C."/>
            <person name="Mangenot S."/>
            <person name="Couloux A."/>
            <person name="Segurens B."/>
            <person name="de Daruvar A."/>
            <person name="Blanchard A."/>
            <person name="Citti C."/>
        </authorList>
    </citation>
    <scope>NUCLEOTIDE SEQUENCE [LARGE SCALE GENOMIC DNA]</scope>
    <source>
        <strain>NCTC 10123 / CIP 59.7 / PG2</strain>
    </source>
</reference>
<feature type="chain" id="PRO_1000091737" description="Elongation factor G">
    <location>
        <begin position="1"/>
        <end position="697"/>
    </location>
</feature>
<feature type="domain" description="tr-type G">
    <location>
        <begin position="8"/>
        <end position="282"/>
    </location>
</feature>
<feature type="binding site" evidence="1">
    <location>
        <begin position="17"/>
        <end position="24"/>
    </location>
    <ligand>
        <name>GTP</name>
        <dbReference type="ChEBI" id="CHEBI:37565"/>
    </ligand>
</feature>
<feature type="binding site" evidence="1">
    <location>
        <begin position="81"/>
        <end position="85"/>
    </location>
    <ligand>
        <name>GTP</name>
        <dbReference type="ChEBI" id="CHEBI:37565"/>
    </ligand>
</feature>
<feature type="binding site" evidence="1">
    <location>
        <begin position="135"/>
        <end position="138"/>
    </location>
    <ligand>
        <name>GTP</name>
        <dbReference type="ChEBI" id="CHEBI:37565"/>
    </ligand>
</feature>